<proteinExistence type="evidence at protein level"/>
<sequence>MTVLLTGGTGRTAKHIAGIFRQTNVPFLVASRSSSAGTAENHRKFDWLDEETFPNALSVDQGMKPISVVWLCPPPLYDLATPVIKFIDFAVSQNVKKFVLLSASVIQKGGPAMGKIHEHLDSIKDVTYTVLRPTWFMENFSTKGEIQCEAIRRDSTVYSATENGKIPFISVVDIARVAACALTAETLKNSDHILQGPDLLTYDEVAQALTGVLGRKITHTKMTEGELAEKLMEEGVTPEEAYMHAAMDSMIKSGSEERVVSDEVKAWTGVKPRGFINFALSEKAAWRARK</sequence>
<name>EASG_CLAP2</name>
<evidence type="ECO:0000250" key="1">
    <source>
        <dbReference type="UniProtKB" id="Q50EL0"/>
    </source>
</evidence>
<evidence type="ECO:0000269" key="2">
    <source>
    </source>
</evidence>
<evidence type="ECO:0000269" key="3">
    <source>
    </source>
</evidence>
<evidence type="ECO:0000269" key="4">
    <source>
    </source>
</evidence>
<evidence type="ECO:0000269" key="5">
    <source>
    </source>
</evidence>
<evidence type="ECO:0000269" key="6">
    <source>
    </source>
</evidence>
<evidence type="ECO:0000269" key="7">
    <source>
    </source>
</evidence>
<evidence type="ECO:0000269" key="8">
    <source>
    </source>
</evidence>
<evidence type="ECO:0000269" key="9">
    <source>
    </source>
</evidence>
<evidence type="ECO:0000269" key="10">
    <source>
    </source>
</evidence>
<evidence type="ECO:0000269" key="11">
    <source>
    </source>
</evidence>
<evidence type="ECO:0000269" key="12">
    <source>
    </source>
</evidence>
<evidence type="ECO:0000303" key="13">
    <source>
    </source>
</evidence>
<evidence type="ECO:0000303" key="14">
    <source>
    </source>
</evidence>
<evidence type="ECO:0000305" key="15"/>
<evidence type="ECO:0000305" key="16">
    <source>
    </source>
</evidence>
<evidence type="ECO:0000305" key="17">
    <source>
    </source>
</evidence>
<keyword id="KW-0017">Alkaloid metabolism</keyword>
<keyword id="KW-0521">NADP</keyword>
<keyword id="KW-0560">Oxidoreductase</keyword>
<keyword id="KW-1185">Reference proteome</keyword>
<accession>M1WEN5</accession>
<accession>G8GV67</accession>
<accession>Q5G5T7</accession>
<comment type="function">
    <text evidence="1 2 3 4 5 6 7 8 9 10 11 12 16 17">Agroclavine dehydrogenase; part of the gene cluster that mediates the biosynthesis of fungal ergot alkaloid (PubMed:14700635, PubMed:14732265, PubMed:15904941, PubMed:17308187, PubMed:17720822). DmaW catalyzes the first step of ergot alkaloid biosynthesis by condensing dimethylallyl diphosphate (DMAP) and tryptophan to form 4-dimethylallyl-L-tryptophan (PubMed:14732265). The second step is catalyzed by the methyltransferase easF that methylates 4-dimethylallyl-L-tryptophan in the presence of S-adenosyl-L-methionine, resulting in the formation of 4-dimethylallyl-L-abrine (By similarity). The catalase easC and the FAD-dependent oxidoreductase easE then transform 4-dimethylallyl-L-abrine to chanoclavine-I which is further oxidized by easD in the presence of NAD(+), resulting in the formation of chanoclavine-I aldehyde (PubMed:20118373, PubMed:21409592). Agroclavine dehydrogenase easG then mediates the conversion of chanoclavine-I aldehyde to agroclavine via a non-enzymatic adduct reaction: the substrate is an iminium intermediate that is formed spontaneously from chanoclavine-I aldehyde in the presence of glutathione (PubMed:20735127, PubMed:21494745). The presence of easA is not required to complete this reaction (PubMed:21494745). Further conversion of agroclavine to paspalic acid is a two-step process involving oxidation of agroclavine to elymoclavine and of elymoclavine to paspalic acid, the second step being performed by the elymoclavine oxidase cloA (PubMed:16538694, PubMed:17720822). Paspalic acid is then further converted to D-lysergic acid (PubMed:15904941). Ergopeptines are assembled from D-lysergic acid and three different amino acids by the D-lysergyl-peptide-synthetases composed each of a monomudular and a trimodular nonribosomal peptide synthetase subunit (PubMed:14700635, PubMed:15904941). LpsB and lpsC encode the monomodular subunits responsible for D-lysergic acid activation and incorporation into the ergopeptine backbone (PubMed:14700635). LpsA1 and A2 subunits encode the trimodular nonribosomal peptide synthetase assembling the tripeptide portion of ergopeptines (PubMed:14700635). LpsA1 is responsible for formation of the major ergopeptine, ergotamine, and lpsA2 for alpha-ergocryptine, the minor ergopeptine of the total alkaloid mixture elaborated by C.purpurea (PubMed:17560817, PubMed:19139103). D-lysergyl-tripeptides are assembled by the nonribosomal peptide synthetases and released as N-(D-lysergyl-aminoacyl)-lactams (PubMed:24361048). Cyclolization of the D-lysergyl-tripeptides is performed by the Fe(2+)/2-ketoglutarate-dependent dioxygenase easH which introduces a hydroxyl group into N-(D-lysergyl-aminoacyl)-lactam at alpha-C of the aminoacyl residue followed by spontaneous condensation with the terminal lactam carbonyl group (PubMed:24361048).</text>
</comment>
<comment type="catalytic activity">
    <reaction evidence="11">
        <text>agroclavine + NADP(+) = didehydroagroclavine + NADPH + H(+)</text>
        <dbReference type="Rhea" id="RHEA:34059"/>
        <dbReference type="ChEBI" id="CHEBI:15378"/>
        <dbReference type="ChEBI" id="CHEBI:57783"/>
        <dbReference type="ChEBI" id="CHEBI:58349"/>
        <dbReference type="ChEBI" id="CHEBI:65036"/>
        <dbReference type="ChEBI" id="CHEBI:65042"/>
        <dbReference type="EC" id="1.5.1.46"/>
    </reaction>
</comment>
<comment type="pathway">
    <text evidence="11">Alkaloid biosynthesis; ergot alkaloid biosynthesis.</text>
</comment>
<comment type="subunit">
    <text evidence="11">Monomer.</text>
</comment>
<comment type="similarity">
    <text evidence="15">Belongs to the fgaFS/easG family.</text>
</comment>
<gene>
    <name evidence="14" type="primary">easG</name>
    <name evidence="13" type="synonym">orfA</name>
    <name type="ORF">CPUR_04077</name>
</gene>
<feature type="chain" id="PRO_0000423496" description="Agroclavine dehydrogenase">
    <location>
        <begin position="1"/>
        <end position="290"/>
    </location>
</feature>
<dbReference type="EC" id="1.5.1.46" evidence="11"/>
<dbReference type="EMBL" id="JN186799">
    <property type="protein sequence ID" value="AET79181.1"/>
    <property type="molecule type" value="Genomic_DNA"/>
</dbReference>
<dbReference type="EMBL" id="CAGA01000020">
    <property type="protein sequence ID" value="CCE30229.1"/>
    <property type="molecule type" value="Genomic_DNA"/>
</dbReference>
<dbReference type="SMR" id="M1WEN5"/>
<dbReference type="STRING" id="1111077.M1WEN5"/>
<dbReference type="VEuPathDB" id="FungiDB:CPUR_04077"/>
<dbReference type="eggNOG" id="ENOG502RYYU">
    <property type="taxonomic scope" value="Eukaryota"/>
</dbReference>
<dbReference type="HOGENOM" id="CLU_007383_10_6_1"/>
<dbReference type="OrthoDB" id="9997102at2759"/>
<dbReference type="UniPathway" id="UPA00327"/>
<dbReference type="Proteomes" id="UP000016801">
    <property type="component" value="Unassembled WGS sequence"/>
</dbReference>
<dbReference type="GO" id="GO:0016491">
    <property type="term" value="F:oxidoreductase activity"/>
    <property type="evidence" value="ECO:0007669"/>
    <property type="project" value="UniProtKB-KW"/>
</dbReference>
<dbReference type="GO" id="GO:0035835">
    <property type="term" value="P:indole alkaloid biosynthetic process"/>
    <property type="evidence" value="ECO:0007669"/>
    <property type="project" value="UniProtKB-UniPathway"/>
</dbReference>
<dbReference type="Gene3D" id="3.40.50.720">
    <property type="entry name" value="NAD(P)-binding Rossmann-like Domain"/>
    <property type="match status" value="1"/>
</dbReference>
<dbReference type="Gene3D" id="3.90.25.10">
    <property type="entry name" value="UDP-galactose 4-epimerase, domain 1"/>
    <property type="match status" value="1"/>
</dbReference>
<dbReference type="InterPro" id="IPR051604">
    <property type="entry name" value="Ergot_Alk_Oxidoreductase"/>
</dbReference>
<dbReference type="InterPro" id="IPR019901">
    <property type="entry name" value="Ergot_alkaloid_biosynthesis"/>
</dbReference>
<dbReference type="InterPro" id="IPR036291">
    <property type="entry name" value="NAD(P)-bd_dom_sf"/>
</dbReference>
<dbReference type="InterPro" id="IPR008030">
    <property type="entry name" value="NmrA-like"/>
</dbReference>
<dbReference type="NCBIfam" id="TIGR03649">
    <property type="entry name" value="ergot_EASG"/>
    <property type="match status" value="1"/>
</dbReference>
<dbReference type="PANTHER" id="PTHR43162">
    <property type="match status" value="1"/>
</dbReference>
<dbReference type="PANTHER" id="PTHR43162:SF1">
    <property type="entry name" value="PRESTALK A DIFFERENTIATION PROTEIN A"/>
    <property type="match status" value="1"/>
</dbReference>
<dbReference type="Pfam" id="PF05368">
    <property type="entry name" value="NmrA"/>
    <property type="match status" value="1"/>
</dbReference>
<dbReference type="SUPFAM" id="SSF51735">
    <property type="entry name" value="NAD(P)-binding Rossmann-fold domains"/>
    <property type="match status" value="1"/>
</dbReference>
<organism>
    <name type="scientific">Claviceps purpurea (strain 20.1)</name>
    <name type="common">Ergot fungus</name>
    <name type="synonym">Sphacelia segetum</name>
    <dbReference type="NCBI Taxonomy" id="1111077"/>
    <lineage>
        <taxon>Eukaryota</taxon>
        <taxon>Fungi</taxon>
        <taxon>Dikarya</taxon>
        <taxon>Ascomycota</taxon>
        <taxon>Pezizomycotina</taxon>
        <taxon>Sordariomycetes</taxon>
        <taxon>Hypocreomycetidae</taxon>
        <taxon>Hypocreales</taxon>
        <taxon>Clavicipitaceae</taxon>
        <taxon>Claviceps</taxon>
    </lineage>
</organism>
<reference key="1">
    <citation type="submission" date="2011-06" db="EMBL/GenBank/DDBJ databases">
        <authorList>
            <person name="Florea S."/>
            <person name="Oeser B."/>
            <person name="Tudzynski P."/>
            <person name="Schardl C.L."/>
        </authorList>
    </citation>
    <scope>NUCLEOTIDE SEQUENCE [GENOMIC DNA]</scope>
    <source>
        <strain>20.1</strain>
    </source>
</reference>
<reference key="2">
    <citation type="journal article" date="2013" name="PLoS Genet.">
        <title>Plant-symbiotic fungi as chemical engineers: Multi-genome analysis of the Clavicipitaceae reveals dynamics of alkaloid loci.</title>
        <authorList>
            <person name="Schardl C.L."/>
            <person name="Young C.A."/>
            <person name="Hesse U."/>
            <person name="Amyotte S.G."/>
            <person name="Andreeva K."/>
            <person name="Calie P.J."/>
            <person name="Fleetwood D.J."/>
            <person name="Haws D.C."/>
            <person name="Moore N."/>
            <person name="Oeser B."/>
            <person name="Panaccione D.G."/>
            <person name="Schweri K.K."/>
            <person name="Voisey C.R."/>
            <person name="Farman M.L."/>
            <person name="Jaromczyk J.W."/>
            <person name="Roe B.A."/>
            <person name="O'Sullivan D.M."/>
            <person name="Scott B."/>
            <person name="Tudzynski P."/>
            <person name="An Z."/>
            <person name="Arnaoudova E.G."/>
            <person name="Bullock C.T."/>
            <person name="Charlton N.D."/>
            <person name="Chen L."/>
            <person name="Cox M."/>
            <person name="Dinkins R.D."/>
            <person name="Florea S."/>
            <person name="Glenn A.E."/>
            <person name="Gordon A."/>
            <person name="Gueldener U."/>
            <person name="Harris D.R."/>
            <person name="Hollin W."/>
            <person name="Jaromczyk J."/>
            <person name="Johnson R.D."/>
            <person name="Khan A.K."/>
            <person name="Leistner E."/>
            <person name="Leuchtmann A."/>
            <person name="Li C."/>
            <person name="Liu J."/>
            <person name="Liu J."/>
            <person name="Liu M."/>
            <person name="Mace W."/>
            <person name="Machado C."/>
            <person name="Nagabhyru P."/>
            <person name="Pan J."/>
            <person name="Schmid J."/>
            <person name="Sugawara K."/>
            <person name="Steiner U."/>
            <person name="Takach J.E."/>
            <person name="Tanaka E."/>
            <person name="Webb J.S."/>
            <person name="Wilson E.V."/>
            <person name="Wiseman J.L."/>
            <person name="Yoshida R."/>
            <person name="Zeng Z."/>
        </authorList>
    </citation>
    <scope>NUCLEOTIDE SEQUENCE [LARGE SCALE GENOMIC DNA]</scope>
    <source>
        <strain>20.1</strain>
    </source>
</reference>
<reference key="3">
    <citation type="journal article" date="2001" name="Appl. Microbiol. Biotechnol.">
        <title>Biotechnology and genetics of ergot alkaloids.</title>
        <authorList>
            <person name="Tudzynski P."/>
            <person name="Correia T."/>
            <person name="Keller U."/>
        </authorList>
    </citation>
    <scope>BIOTECHNOLOGY</scope>
    <source>
        <strain>P1 / 1029/N5</strain>
    </source>
</reference>
<reference key="4">
    <citation type="journal article" date="2003" name="Chem. Biol.">
        <title>Molecular cloning and analysis of the ergopeptine assembly system in the ergot fungus Claviceps purpurea.</title>
        <authorList>
            <person name="Correia T."/>
            <person name="Grammel N."/>
            <person name="Ortel I."/>
            <person name="Keller U."/>
            <person name="Tudzynski P."/>
        </authorList>
    </citation>
    <scope>FUNCTION</scope>
</reference>
<reference key="5">
    <citation type="journal article" date="2004" name="Fungal Genet. Biol.">
        <title>The determinant step in ergot alkaloid biosynthesis by an endophyte of perennial ryegrass.</title>
        <authorList>
            <person name="Wang J."/>
            <person name="Machado C."/>
            <person name="Panaccione D.G."/>
            <person name="Tsai H.-F."/>
            <person name="Schardl C.L."/>
        </authorList>
    </citation>
    <scope>FUNCTION</scope>
    <source>
        <strain>ATCC 20102 / Farmitalia FI 32/17</strain>
    </source>
</reference>
<reference key="6">
    <citation type="journal article" date="2005" name="Phytochemistry">
        <title>The ergot alkaloid gene cluster in Claviceps purpurea: extension of the cluster sequence and intra species evolution.</title>
        <authorList>
            <person name="Haarmann T."/>
            <person name="Machado C."/>
            <person name="Lubbe Y."/>
            <person name="Correia T."/>
            <person name="Schardl C.L."/>
            <person name="Panaccione D.G."/>
            <person name="Tudzynski P."/>
        </authorList>
    </citation>
    <scope>FUNCTION</scope>
    <scope>IDENTIFICATION IN THE EAS CLUSTER</scope>
</reference>
<reference key="7">
    <citation type="journal article" date="2006" name="ChemBioChem">
        <title>Identification of the cytochrome P450 monooxygenase that bridges the clavine and ergoline alkaloid pathways.</title>
        <authorList>
            <person name="Haarmann T."/>
            <person name="Ortel I."/>
            <person name="Tudzynski P."/>
            <person name="Keller U."/>
        </authorList>
    </citation>
    <scope>FUNCTION</scope>
    <source>
        <strain>P1 / 1029/N5</strain>
    </source>
</reference>
<reference key="8">
    <citation type="journal article" date="2007" name="Appl. Environ. Microbiol.">
        <title>A complex ergovaline gene cluster in epichloe endophytes of grasses.</title>
        <authorList>
            <person name="Fleetwood D.J."/>
            <person name="Scott B."/>
            <person name="Lane G.A."/>
            <person name="Tanaka A."/>
            <person name="Johnson R.D."/>
        </authorList>
    </citation>
    <scope>FUNCTION</scope>
</reference>
<reference key="9">
    <citation type="journal article" date="2007" name="Appl. Environ. Microbiol.">
        <title>Comparison of ergot alkaloid biosynthesis gene clusters in Claviceps species indicates loss of late pathway steps in evolution of C. fusiformis.</title>
        <authorList>
            <person name="Lorenz N."/>
            <person name="Wilson E.V."/>
            <person name="Machado C."/>
            <person name="Schardl C.L."/>
            <person name="Tudzynski P."/>
        </authorList>
    </citation>
    <scope>FUNCTION</scope>
</reference>
<reference key="10">
    <citation type="journal article" date="2008" name="Fungal Genet. Biol.">
        <title>Use of a nonhomologous end joining deficient strain (Deltaku70) of the ergot fungus Claviceps purpurea for identification of a nonribosomal peptide synthetase gene involved in ergotamine biosynthesis.</title>
        <authorList>
            <person name="Haarmann T."/>
            <person name="Lorenz N."/>
            <person name="Tudzynski P."/>
        </authorList>
    </citation>
    <scope>FUNCTION</scope>
</reference>
<reference key="11">
    <citation type="journal article" date="2009" name="J. Biol. Chem.">
        <title>Combinatorial assembly of simple and complex D-lysergic acid alkaloid peptide classes in the ergot fungus Claviceps purpurea.</title>
        <authorList>
            <person name="Ortel I."/>
            <person name="Keller U."/>
        </authorList>
    </citation>
    <scope>FUNCTION</scope>
</reference>
<reference key="12">
    <citation type="journal article" date="2010" name="Appl. Environ. Microbiol.">
        <title>Alkaloid cluster gene ccsA of the ergot fungus Claviceps purpurea encodes chanoclavine I synthase, a flavin adenine dinucleotide-containing oxidoreductase mediating the transformation of N-methyl-dimethylallyltryptophan to chanoclavine I.</title>
        <authorList>
            <person name="Lorenz N."/>
            <person name="Olsovska J."/>
            <person name="Sulc M."/>
            <person name="Tudzynski P."/>
        </authorList>
    </citation>
    <scope>FUNCTION</scope>
</reference>
<reference key="13">
    <citation type="journal article" date="2010" name="J. Am. Chem. Soc.">
        <title>Controlling a structural branch point in ergot alkaloid biosynthesis.</title>
        <authorList>
            <person name="Cheng J.Z."/>
            <person name="Coyle C.M."/>
            <person name="Panaccione D.G."/>
            <person name="O'Connor S.E."/>
        </authorList>
    </citation>
    <scope>FUNCTION</scope>
    <source>
        <strain>ATCC 20102 / Farmitalia FI 32/17</strain>
    </source>
</reference>
<reference key="14">
    <citation type="journal article" date="2011" name="Curr. Genet.">
        <title>Ergot cluster-encoded catalase is required for synthesis of chanoclavine-I in Aspergillus fumigatus.</title>
        <authorList>
            <person name="Goetz K.E."/>
            <person name="Coyle C.M."/>
            <person name="Cheng J.Z."/>
            <person name="O'Connor S.E."/>
            <person name="Panaccione D.G."/>
        </authorList>
    </citation>
    <scope>FUNCTION</scope>
</reference>
<reference key="15">
    <citation type="journal article" date="2011" name="Org. Biomol. Chem.">
        <title>New insights into ergot alkaloid biosynthesis in Claviceps purpurea: an agroclavine synthase EasG catalyses, via a non-enzymatic adduct with reduced glutathione, the conversion of chanoclavine-I aldehyde to agroclavine.</title>
        <authorList>
            <person name="Matuschek M."/>
            <person name="Wallwey C."/>
            <person name="Xie X."/>
            <person name="Li S.M."/>
        </authorList>
    </citation>
    <scope>FUNCTION</scope>
    <scope>CATALYTIC ACTIVITY</scope>
    <scope>PATHWAY</scope>
</reference>
<reference key="16">
    <citation type="journal article" date="2014" name="Chem. Biol.">
        <title>Cyclolization of D-lysergic acid alkaloid peptides.</title>
        <authorList>
            <person name="Havemann J."/>
            <person name="Vogel D."/>
            <person name="Loll B."/>
            <person name="Keller U."/>
        </authorList>
    </citation>
    <scope>FUNCTION</scope>
</reference>
<protein>
    <recommendedName>
        <fullName evidence="14">Agroclavine dehydrogenase</fullName>
        <ecNumber evidence="11">1.5.1.46</ecNumber>
    </recommendedName>
    <alternativeName>
        <fullName evidence="14">Ergot alkaloid biosynthesis protein G</fullName>
    </alternativeName>
</protein>